<evidence type="ECO:0000250" key="1"/>
<evidence type="ECO:0000305" key="2"/>
<reference key="1">
    <citation type="journal article" date="2008" name="BMC Plant Biol.">
        <title>Complete nucleotide sequence of the Cryptomeria japonica D. Don. chloroplast genome and comparative chloroplast genomics: diversified genomic structure of coniferous species.</title>
        <authorList>
            <person name="Hirao T."/>
            <person name="Watanabe A."/>
            <person name="Kurita M."/>
            <person name="Kondo T."/>
            <person name="Takata K."/>
        </authorList>
    </citation>
    <scope>NUCLEOTIDE SEQUENCE [LARGE SCALE GENOMIC DNA]</scope>
</reference>
<proteinExistence type="inferred from homology"/>
<organism>
    <name type="scientific">Cryptomeria japonica</name>
    <name type="common">Japanese cedar</name>
    <name type="synonym">Cupressus japonica</name>
    <dbReference type="NCBI Taxonomy" id="3369"/>
    <lineage>
        <taxon>Eukaryota</taxon>
        <taxon>Viridiplantae</taxon>
        <taxon>Streptophyta</taxon>
        <taxon>Embryophyta</taxon>
        <taxon>Tracheophyta</taxon>
        <taxon>Spermatophyta</taxon>
        <taxon>Pinopsida</taxon>
        <taxon>Pinidae</taxon>
        <taxon>Conifers II</taxon>
        <taxon>Cupressales</taxon>
        <taxon>Cupressaceae</taxon>
        <taxon>Cryptomeria</taxon>
    </lineage>
</organism>
<feature type="chain" id="PRO_0000354566" description="Large ribosomal subunit protein uL22c">
    <location>
        <begin position="1"/>
        <end position="126"/>
    </location>
</feature>
<keyword id="KW-0150">Chloroplast</keyword>
<keyword id="KW-0934">Plastid</keyword>
<keyword id="KW-0687">Ribonucleoprotein</keyword>
<keyword id="KW-0689">Ribosomal protein</keyword>
<keyword id="KW-0694">RNA-binding</keyword>
<keyword id="KW-0699">rRNA-binding</keyword>
<geneLocation type="chloroplast"/>
<protein>
    <recommendedName>
        <fullName evidence="2">Large ribosomal subunit protein uL22c</fullName>
    </recommendedName>
    <alternativeName>
        <fullName>50S ribosomal protein L22, chloroplastic</fullName>
    </alternativeName>
</protein>
<dbReference type="EMBL" id="AP009377">
    <property type="protein sequence ID" value="BAG16646.1"/>
    <property type="molecule type" value="Genomic_DNA"/>
</dbReference>
<dbReference type="RefSeq" id="YP_001806648.1">
    <property type="nucleotide sequence ID" value="NC_010548.1"/>
</dbReference>
<dbReference type="SMR" id="B1VKD5"/>
<dbReference type="GeneID" id="6166575"/>
<dbReference type="KEGG" id="cjf:6166575"/>
<dbReference type="OrthoDB" id="1840754at2759"/>
<dbReference type="GO" id="GO:0009507">
    <property type="term" value="C:chloroplast"/>
    <property type="evidence" value="ECO:0007669"/>
    <property type="project" value="UniProtKB-SubCell"/>
</dbReference>
<dbReference type="GO" id="GO:0015934">
    <property type="term" value="C:large ribosomal subunit"/>
    <property type="evidence" value="ECO:0007669"/>
    <property type="project" value="InterPro"/>
</dbReference>
<dbReference type="GO" id="GO:0019843">
    <property type="term" value="F:rRNA binding"/>
    <property type="evidence" value="ECO:0007669"/>
    <property type="project" value="UniProtKB-UniRule"/>
</dbReference>
<dbReference type="GO" id="GO:0003735">
    <property type="term" value="F:structural constituent of ribosome"/>
    <property type="evidence" value="ECO:0007669"/>
    <property type="project" value="InterPro"/>
</dbReference>
<dbReference type="GO" id="GO:0006412">
    <property type="term" value="P:translation"/>
    <property type="evidence" value="ECO:0007669"/>
    <property type="project" value="UniProtKB-UniRule"/>
</dbReference>
<dbReference type="CDD" id="cd00336">
    <property type="entry name" value="Ribosomal_L22"/>
    <property type="match status" value="1"/>
</dbReference>
<dbReference type="Gene3D" id="3.90.470.10">
    <property type="entry name" value="Ribosomal protein L22/L17"/>
    <property type="match status" value="1"/>
</dbReference>
<dbReference type="HAMAP" id="MF_01331_B">
    <property type="entry name" value="Ribosomal_uL22_B"/>
    <property type="match status" value="1"/>
</dbReference>
<dbReference type="InterPro" id="IPR001063">
    <property type="entry name" value="Ribosomal_uL22"/>
</dbReference>
<dbReference type="InterPro" id="IPR005727">
    <property type="entry name" value="Ribosomal_uL22_bac/chlpt-type"/>
</dbReference>
<dbReference type="InterPro" id="IPR047867">
    <property type="entry name" value="Ribosomal_uL22_bac/org-type"/>
</dbReference>
<dbReference type="InterPro" id="IPR018260">
    <property type="entry name" value="Ribosomal_uL22_CS"/>
</dbReference>
<dbReference type="InterPro" id="IPR036394">
    <property type="entry name" value="Ribosomal_uL22_sf"/>
</dbReference>
<dbReference type="NCBIfam" id="TIGR01044">
    <property type="entry name" value="rplV_bact"/>
    <property type="match status" value="1"/>
</dbReference>
<dbReference type="PANTHER" id="PTHR13501">
    <property type="entry name" value="CHLOROPLAST 50S RIBOSOMAL PROTEIN L22-RELATED"/>
    <property type="match status" value="1"/>
</dbReference>
<dbReference type="PANTHER" id="PTHR13501:SF10">
    <property type="entry name" value="LARGE RIBOSOMAL SUBUNIT PROTEIN UL22M"/>
    <property type="match status" value="1"/>
</dbReference>
<dbReference type="Pfam" id="PF00237">
    <property type="entry name" value="Ribosomal_L22"/>
    <property type="match status" value="1"/>
</dbReference>
<dbReference type="SUPFAM" id="SSF54843">
    <property type="entry name" value="Ribosomal protein L22"/>
    <property type="match status" value="1"/>
</dbReference>
<dbReference type="PROSITE" id="PS00464">
    <property type="entry name" value="RIBOSOMAL_L22"/>
    <property type="match status" value="1"/>
</dbReference>
<sequence length="126" mass="14384">MNRASTRKIRAVAKHVRMSSNKARRVAHQLRGCTYMEALSILNWMPHRACYPILKVLRSAAANAYHNMGIDKGFLFVLMAEVNEGPIFKRFRPRARGRGYPIQKPTCHISITLEDVTDSNSIMVKK</sequence>
<name>RK22_CRYJA</name>
<gene>
    <name type="primary">rpl22</name>
</gene>
<comment type="function">
    <text evidence="1">This protein binds specifically to 23S rRNA.</text>
</comment>
<comment type="function">
    <text evidence="1">The globular domain of the protein is located near the polypeptide exit tunnel on the outside of the subunit, while an extended beta-hairpin is found that lines the wall of the exit tunnel in the center of the 70S ribosome.</text>
</comment>
<comment type="subunit">
    <text evidence="1">Part of the 50S ribosomal subunit.</text>
</comment>
<comment type="subcellular location">
    <subcellularLocation>
        <location>Plastid</location>
        <location>Chloroplast</location>
    </subcellularLocation>
</comment>
<comment type="similarity">
    <text evidence="2">Belongs to the universal ribosomal protein uL22 family.</text>
</comment>
<accession>B1VKD5</accession>